<reference key="1">
    <citation type="journal article" date="2001" name="Science">
        <title>Complete genome sequence of a virulent isolate of Streptococcus pneumoniae.</title>
        <authorList>
            <person name="Tettelin H."/>
            <person name="Nelson K.E."/>
            <person name="Paulsen I.T."/>
            <person name="Eisen J.A."/>
            <person name="Read T.D."/>
            <person name="Peterson S.N."/>
            <person name="Heidelberg J.F."/>
            <person name="DeBoy R.T."/>
            <person name="Haft D.H."/>
            <person name="Dodson R.J."/>
            <person name="Durkin A.S."/>
            <person name="Gwinn M.L."/>
            <person name="Kolonay J.F."/>
            <person name="Nelson W.C."/>
            <person name="Peterson J.D."/>
            <person name="Umayam L.A."/>
            <person name="White O."/>
            <person name="Salzberg S.L."/>
            <person name="Lewis M.R."/>
            <person name="Radune D."/>
            <person name="Holtzapple E.K."/>
            <person name="Khouri H.M."/>
            <person name="Wolf A.M."/>
            <person name="Utterback T.R."/>
            <person name="Hansen C.L."/>
            <person name="McDonald L.A."/>
            <person name="Feldblyum T.V."/>
            <person name="Angiuoli S.V."/>
            <person name="Dickinson T."/>
            <person name="Hickey E.K."/>
            <person name="Holt I.E."/>
            <person name="Loftus B.J."/>
            <person name="Yang F."/>
            <person name="Smith H.O."/>
            <person name="Venter J.C."/>
            <person name="Dougherty B.A."/>
            <person name="Morrison D.A."/>
            <person name="Hollingshead S.K."/>
            <person name="Fraser C.M."/>
        </authorList>
    </citation>
    <scope>NUCLEOTIDE SEQUENCE [LARGE SCALE GENOMIC DNA]</scope>
    <source>
        <strain>ATCC BAA-334 / TIGR4</strain>
    </source>
</reference>
<accession>Q97PP4</accession>
<comment type="function">
    <text evidence="1">Catalyzes the conversion of glucosamine-6-phosphate to glucosamine-1-phosphate.</text>
</comment>
<comment type="catalytic activity">
    <reaction evidence="1">
        <text>alpha-D-glucosamine 1-phosphate = D-glucosamine 6-phosphate</text>
        <dbReference type="Rhea" id="RHEA:23424"/>
        <dbReference type="ChEBI" id="CHEBI:58516"/>
        <dbReference type="ChEBI" id="CHEBI:58725"/>
        <dbReference type="EC" id="5.4.2.10"/>
    </reaction>
</comment>
<comment type="cofactor">
    <cofactor evidence="1">
        <name>Mg(2+)</name>
        <dbReference type="ChEBI" id="CHEBI:18420"/>
    </cofactor>
    <text evidence="1">Binds 1 Mg(2+) ion per subunit.</text>
</comment>
<comment type="PTM">
    <text evidence="1">Activated by phosphorylation.</text>
</comment>
<comment type="similarity">
    <text evidence="1">Belongs to the phosphohexose mutase family.</text>
</comment>
<keyword id="KW-0413">Isomerase</keyword>
<keyword id="KW-0460">Magnesium</keyword>
<keyword id="KW-0479">Metal-binding</keyword>
<keyword id="KW-0597">Phosphoprotein</keyword>
<keyword id="KW-1185">Reference proteome</keyword>
<sequence length="450" mass="48123">MGKYFGTDGVRGEANLELTPELAFKLGRFGGYVLSQHETEAPKVFVGRDTRISGEMLESALVAGLLSVGIHVYKLGVLATPAVAYLVETEGASAGVMISASHNPALDNGIKFFGGDGFKLDDEKEAEIEALLDAEEDTLPRPSAEGLGILVDYPEGLRKYEGYLVSTGTPLDGMKVALDTANGAASTSARQIFADLGAQLTVIGETPDGLNINLNVGSTHPEALQEVVKESGSAIGLAFDGDSDRLIAVDENGDIVDGDKIMYIIGKYLSEKGQLAQNTIVTTVMSNLGFHKALNREGINKAVTAVGDRYVVEEMRKSGYNLGGEQSGHVILMDYNTTGDGQLSAVQLTKIMKETGKSLSELAAEVTIYPQKLVNIRVENVMKEKAMEVPAIKAIIEKMEEEMAGNGRILVRPSGTEPLLRVMAEAPTTEEVNYYVDTITDVVRAEIGID</sequence>
<feature type="chain" id="PRO_0000147973" description="Phosphoglucosamine mutase">
    <location>
        <begin position="1"/>
        <end position="450"/>
    </location>
</feature>
<feature type="active site" description="Phosphoserine intermediate" evidence="1">
    <location>
        <position position="101"/>
    </location>
</feature>
<feature type="binding site" description="via phosphate group" evidence="1">
    <location>
        <position position="101"/>
    </location>
    <ligand>
        <name>Mg(2+)</name>
        <dbReference type="ChEBI" id="CHEBI:18420"/>
    </ligand>
</feature>
<feature type="binding site" evidence="1">
    <location>
        <position position="240"/>
    </location>
    <ligand>
        <name>Mg(2+)</name>
        <dbReference type="ChEBI" id="CHEBI:18420"/>
    </ligand>
</feature>
<feature type="binding site" evidence="1">
    <location>
        <position position="242"/>
    </location>
    <ligand>
        <name>Mg(2+)</name>
        <dbReference type="ChEBI" id="CHEBI:18420"/>
    </ligand>
</feature>
<feature type="binding site" evidence="1">
    <location>
        <position position="244"/>
    </location>
    <ligand>
        <name>Mg(2+)</name>
        <dbReference type="ChEBI" id="CHEBI:18420"/>
    </ligand>
</feature>
<feature type="modified residue" description="Phosphoserine" evidence="1">
    <location>
        <position position="101"/>
    </location>
</feature>
<protein>
    <recommendedName>
        <fullName evidence="1">Phosphoglucosamine mutase</fullName>
        <ecNumber evidence="1">5.4.2.10</ecNumber>
    </recommendedName>
</protein>
<evidence type="ECO:0000255" key="1">
    <source>
        <dbReference type="HAMAP-Rule" id="MF_01554"/>
    </source>
</evidence>
<organism>
    <name type="scientific">Streptococcus pneumoniae serotype 4 (strain ATCC BAA-334 / TIGR4)</name>
    <dbReference type="NCBI Taxonomy" id="170187"/>
    <lineage>
        <taxon>Bacteria</taxon>
        <taxon>Bacillati</taxon>
        <taxon>Bacillota</taxon>
        <taxon>Bacilli</taxon>
        <taxon>Lactobacillales</taxon>
        <taxon>Streptococcaceae</taxon>
        <taxon>Streptococcus</taxon>
    </lineage>
</organism>
<gene>
    <name evidence="1" type="primary">glmM</name>
    <name type="ordered locus">SP_1559</name>
</gene>
<proteinExistence type="inferred from homology"/>
<name>GLMM_STRPN</name>
<dbReference type="EC" id="5.4.2.10" evidence="1"/>
<dbReference type="EMBL" id="AE005672">
    <property type="protein sequence ID" value="AAK75646.1"/>
    <property type="molecule type" value="Genomic_DNA"/>
</dbReference>
<dbReference type="PIR" id="E95181">
    <property type="entry name" value="E95181"/>
</dbReference>
<dbReference type="RefSeq" id="WP_000521411.1">
    <property type="nucleotide sequence ID" value="NZ_CP155539.1"/>
</dbReference>
<dbReference type="SMR" id="Q97PP4"/>
<dbReference type="PaxDb" id="170187-SP_1559"/>
<dbReference type="EnsemblBacteria" id="AAK75646">
    <property type="protein sequence ID" value="AAK75646"/>
    <property type="gene ID" value="SP_1559"/>
</dbReference>
<dbReference type="KEGG" id="spn:SP_1559"/>
<dbReference type="eggNOG" id="COG1109">
    <property type="taxonomic scope" value="Bacteria"/>
</dbReference>
<dbReference type="PhylomeDB" id="Q97PP4"/>
<dbReference type="BioCyc" id="SPNE170187:G1FZB-1578-MONOMER"/>
<dbReference type="Proteomes" id="UP000000585">
    <property type="component" value="Chromosome"/>
</dbReference>
<dbReference type="GO" id="GO:0005829">
    <property type="term" value="C:cytosol"/>
    <property type="evidence" value="ECO:0007669"/>
    <property type="project" value="TreeGrafter"/>
</dbReference>
<dbReference type="GO" id="GO:0000287">
    <property type="term" value="F:magnesium ion binding"/>
    <property type="evidence" value="ECO:0007669"/>
    <property type="project" value="UniProtKB-UniRule"/>
</dbReference>
<dbReference type="GO" id="GO:0008966">
    <property type="term" value="F:phosphoglucosamine mutase activity"/>
    <property type="evidence" value="ECO:0007669"/>
    <property type="project" value="UniProtKB-UniRule"/>
</dbReference>
<dbReference type="GO" id="GO:0004615">
    <property type="term" value="F:phosphomannomutase activity"/>
    <property type="evidence" value="ECO:0007669"/>
    <property type="project" value="TreeGrafter"/>
</dbReference>
<dbReference type="GO" id="GO:0005975">
    <property type="term" value="P:carbohydrate metabolic process"/>
    <property type="evidence" value="ECO:0007669"/>
    <property type="project" value="InterPro"/>
</dbReference>
<dbReference type="GO" id="GO:0009252">
    <property type="term" value="P:peptidoglycan biosynthetic process"/>
    <property type="evidence" value="ECO:0007669"/>
    <property type="project" value="TreeGrafter"/>
</dbReference>
<dbReference type="GO" id="GO:0006048">
    <property type="term" value="P:UDP-N-acetylglucosamine biosynthetic process"/>
    <property type="evidence" value="ECO:0007669"/>
    <property type="project" value="TreeGrafter"/>
</dbReference>
<dbReference type="CDD" id="cd05802">
    <property type="entry name" value="GlmM"/>
    <property type="match status" value="1"/>
</dbReference>
<dbReference type="FunFam" id="3.30.310.50:FF:000001">
    <property type="entry name" value="Phosphoglucosamine mutase"/>
    <property type="match status" value="1"/>
</dbReference>
<dbReference type="FunFam" id="3.40.120.10:FF:000001">
    <property type="entry name" value="Phosphoglucosamine mutase"/>
    <property type="match status" value="1"/>
</dbReference>
<dbReference type="FunFam" id="3.40.120.10:FF:000002">
    <property type="entry name" value="Phosphoglucosamine mutase"/>
    <property type="match status" value="1"/>
</dbReference>
<dbReference type="Gene3D" id="3.40.120.10">
    <property type="entry name" value="Alpha-D-Glucose-1,6-Bisphosphate, subunit A, domain 3"/>
    <property type="match status" value="3"/>
</dbReference>
<dbReference type="Gene3D" id="3.30.310.50">
    <property type="entry name" value="Alpha-D-phosphohexomutase, C-terminal domain"/>
    <property type="match status" value="1"/>
</dbReference>
<dbReference type="HAMAP" id="MF_01554_B">
    <property type="entry name" value="GlmM_B"/>
    <property type="match status" value="1"/>
</dbReference>
<dbReference type="InterPro" id="IPR005844">
    <property type="entry name" value="A-D-PHexomutase_a/b/a-I"/>
</dbReference>
<dbReference type="InterPro" id="IPR016055">
    <property type="entry name" value="A-D-PHexomutase_a/b/a-I/II/III"/>
</dbReference>
<dbReference type="InterPro" id="IPR005845">
    <property type="entry name" value="A-D-PHexomutase_a/b/a-II"/>
</dbReference>
<dbReference type="InterPro" id="IPR005846">
    <property type="entry name" value="A-D-PHexomutase_a/b/a-III"/>
</dbReference>
<dbReference type="InterPro" id="IPR005843">
    <property type="entry name" value="A-D-PHexomutase_C"/>
</dbReference>
<dbReference type="InterPro" id="IPR036900">
    <property type="entry name" value="A-D-PHexomutase_C_sf"/>
</dbReference>
<dbReference type="InterPro" id="IPR016066">
    <property type="entry name" value="A-D-PHexomutase_CS"/>
</dbReference>
<dbReference type="InterPro" id="IPR005841">
    <property type="entry name" value="Alpha-D-phosphohexomutase_SF"/>
</dbReference>
<dbReference type="InterPro" id="IPR006352">
    <property type="entry name" value="GlmM_bact"/>
</dbReference>
<dbReference type="InterPro" id="IPR050060">
    <property type="entry name" value="Phosphoglucosamine_mutase"/>
</dbReference>
<dbReference type="NCBIfam" id="TIGR01455">
    <property type="entry name" value="glmM"/>
    <property type="match status" value="1"/>
</dbReference>
<dbReference type="PANTHER" id="PTHR42946:SF1">
    <property type="entry name" value="PHOSPHOGLUCOMUTASE (ALPHA-D-GLUCOSE-1,6-BISPHOSPHATE-DEPENDENT)"/>
    <property type="match status" value="1"/>
</dbReference>
<dbReference type="PANTHER" id="PTHR42946">
    <property type="entry name" value="PHOSPHOHEXOSE MUTASE"/>
    <property type="match status" value="1"/>
</dbReference>
<dbReference type="Pfam" id="PF02878">
    <property type="entry name" value="PGM_PMM_I"/>
    <property type="match status" value="1"/>
</dbReference>
<dbReference type="Pfam" id="PF02879">
    <property type="entry name" value="PGM_PMM_II"/>
    <property type="match status" value="1"/>
</dbReference>
<dbReference type="Pfam" id="PF02880">
    <property type="entry name" value="PGM_PMM_III"/>
    <property type="match status" value="1"/>
</dbReference>
<dbReference type="Pfam" id="PF00408">
    <property type="entry name" value="PGM_PMM_IV"/>
    <property type="match status" value="1"/>
</dbReference>
<dbReference type="PRINTS" id="PR00509">
    <property type="entry name" value="PGMPMM"/>
</dbReference>
<dbReference type="SUPFAM" id="SSF55957">
    <property type="entry name" value="Phosphoglucomutase, C-terminal domain"/>
    <property type="match status" value="1"/>
</dbReference>
<dbReference type="SUPFAM" id="SSF53738">
    <property type="entry name" value="Phosphoglucomutase, first 3 domains"/>
    <property type="match status" value="3"/>
</dbReference>
<dbReference type="PROSITE" id="PS00710">
    <property type="entry name" value="PGM_PMM"/>
    <property type="match status" value="1"/>
</dbReference>